<sequence>MVTLFLSPSCTSCRKARAWLVKHEVDFQEHNIITSPLSRDELMSILSFTENGTEDIISTRSKVFQKLDVDVEELSISDLIDLIAKNPSLLRRPIIMDQKRMQIGFNEDEIRAFLSRDYRKQELRQATIKAEIEG</sequence>
<reference key="1">
    <citation type="journal article" date="2002" name="Proc. Natl. Acad. Sci. U.S.A.">
        <title>Genome sequence of a serotype M3 strain of group A Streptococcus: phage-encoded toxins, the high-virulence phenotype, and clone emergence.</title>
        <authorList>
            <person name="Beres S.B."/>
            <person name="Sylva G.L."/>
            <person name="Barbian K.D."/>
            <person name="Lei B."/>
            <person name="Hoff J.S."/>
            <person name="Mammarella N.D."/>
            <person name="Liu M.-Y."/>
            <person name="Smoot J.C."/>
            <person name="Porcella S.F."/>
            <person name="Parkins L.D."/>
            <person name="Campbell D.S."/>
            <person name="Smith T.M."/>
            <person name="McCormick J.K."/>
            <person name="Leung D.Y.M."/>
            <person name="Schlievert P.M."/>
            <person name="Musser J.M."/>
        </authorList>
    </citation>
    <scope>NUCLEOTIDE SEQUENCE [LARGE SCALE GENOMIC DNA]</scope>
    <source>
        <strain>ATCC BAA-595 / MGAS315</strain>
    </source>
</reference>
<organism>
    <name type="scientific">Streptococcus pyogenes serotype M3 (strain ATCC BAA-595 / MGAS315)</name>
    <dbReference type="NCBI Taxonomy" id="198466"/>
    <lineage>
        <taxon>Bacteria</taxon>
        <taxon>Bacillati</taxon>
        <taxon>Bacillota</taxon>
        <taxon>Bacilli</taxon>
        <taxon>Lactobacillales</taxon>
        <taxon>Streptococcaceae</taxon>
        <taxon>Streptococcus</taxon>
    </lineage>
</organism>
<accession>P0CZ82</accession>
<accession>Q8K7C0</accession>
<keyword id="KW-0963">Cytoplasm</keyword>
<keyword id="KW-1015">Disulfide bond</keyword>
<keyword id="KW-0676">Redox-active center</keyword>
<keyword id="KW-0804">Transcription</keyword>
<keyword id="KW-0805">Transcription regulation</keyword>
<feature type="chain" id="PRO_0000162578" description="Global transcriptional regulator Spx">
    <location>
        <begin position="1"/>
        <end position="134"/>
    </location>
</feature>
<feature type="disulfide bond" description="Redox-active" evidence="1">
    <location>
        <begin position="10"/>
        <end position="13"/>
    </location>
</feature>
<evidence type="ECO:0000255" key="1">
    <source>
        <dbReference type="HAMAP-Rule" id="MF_01132"/>
    </source>
</evidence>
<comment type="function">
    <text evidence="1">Global transcriptional regulator that plays a key role in stress response and exerts either positive or negative regulation of genes. Acts by interacting with the C-terminal domain of the alpha subunit of the RNA polymerase (RNAP). This interaction can enhance binding of RNAP to the promoter region of target genes and stimulate their transcription, or block interaction of RNAP with activator.</text>
</comment>
<comment type="subunit">
    <text evidence="1">Interacts with the C-terminal domain of the alpha subunit of the RNAP.</text>
</comment>
<comment type="subcellular location">
    <subcellularLocation>
        <location evidence="1">Cytoplasm</location>
    </subcellularLocation>
</comment>
<comment type="similarity">
    <text evidence="1">Belongs to the ArsC family. Spx subfamily.</text>
</comment>
<dbReference type="EMBL" id="AE014074">
    <property type="protein sequence ID" value="AAM79492.1"/>
    <property type="molecule type" value="Genomic_DNA"/>
</dbReference>
<dbReference type="RefSeq" id="WP_002984496.1">
    <property type="nucleotide sequence ID" value="NC_004070.1"/>
</dbReference>
<dbReference type="SMR" id="P0CZ82"/>
<dbReference type="KEGG" id="spg:SpyM3_0885"/>
<dbReference type="HOGENOM" id="CLU_116644_1_1_9"/>
<dbReference type="Proteomes" id="UP000000564">
    <property type="component" value="Chromosome"/>
</dbReference>
<dbReference type="GO" id="GO:0005737">
    <property type="term" value="C:cytoplasm"/>
    <property type="evidence" value="ECO:0007669"/>
    <property type="project" value="UniProtKB-SubCell"/>
</dbReference>
<dbReference type="GO" id="GO:0045892">
    <property type="term" value="P:negative regulation of DNA-templated transcription"/>
    <property type="evidence" value="ECO:0007669"/>
    <property type="project" value="InterPro"/>
</dbReference>
<dbReference type="CDD" id="cd03032">
    <property type="entry name" value="ArsC_Spx"/>
    <property type="match status" value="1"/>
</dbReference>
<dbReference type="Gene3D" id="3.40.30.10">
    <property type="entry name" value="Glutaredoxin"/>
    <property type="match status" value="1"/>
</dbReference>
<dbReference type="HAMAP" id="MF_01132">
    <property type="entry name" value="Spx"/>
    <property type="match status" value="1"/>
</dbReference>
<dbReference type="InterPro" id="IPR006660">
    <property type="entry name" value="Arsenate_reductase-like"/>
</dbReference>
<dbReference type="InterPro" id="IPR023731">
    <property type="entry name" value="Spx"/>
</dbReference>
<dbReference type="InterPro" id="IPR036249">
    <property type="entry name" value="Thioredoxin-like_sf"/>
</dbReference>
<dbReference type="InterPro" id="IPR006504">
    <property type="entry name" value="Tscrpt_reg_Spx/MgsR"/>
</dbReference>
<dbReference type="NCBIfam" id="TIGR01617">
    <property type="entry name" value="arsC_related"/>
    <property type="match status" value="1"/>
</dbReference>
<dbReference type="NCBIfam" id="NF002459">
    <property type="entry name" value="PRK01655.1"/>
    <property type="match status" value="1"/>
</dbReference>
<dbReference type="PANTHER" id="PTHR30041">
    <property type="entry name" value="ARSENATE REDUCTASE"/>
    <property type="match status" value="1"/>
</dbReference>
<dbReference type="PANTHER" id="PTHR30041:SF7">
    <property type="entry name" value="GLOBAL TRANSCRIPTIONAL REGULATOR SPX"/>
    <property type="match status" value="1"/>
</dbReference>
<dbReference type="Pfam" id="PF03960">
    <property type="entry name" value="ArsC"/>
    <property type="match status" value="1"/>
</dbReference>
<dbReference type="SUPFAM" id="SSF52833">
    <property type="entry name" value="Thioredoxin-like"/>
    <property type="match status" value="1"/>
</dbReference>
<dbReference type="PROSITE" id="PS51353">
    <property type="entry name" value="ARSC"/>
    <property type="match status" value="1"/>
</dbReference>
<protein>
    <recommendedName>
        <fullName evidence="1">Global transcriptional regulator Spx</fullName>
    </recommendedName>
</protein>
<gene>
    <name evidence="1" type="primary">spx</name>
    <name type="ordered locus">SpyM3_0885</name>
</gene>
<name>SPX_STRP3</name>
<proteinExistence type="inferred from homology"/>